<keyword id="KW-1003">Cell membrane</keyword>
<keyword id="KW-0472">Membrane</keyword>
<keyword id="KW-0812">Transmembrane</keyword>
<keyword id="KW-1133">Transmembrane helix</keyword>
<name>Y969_STAA9</name>
<organism>
    <name type="scientific">Staphylococcus aureus (strain JH9)</name>
    <dbReference type="NCBI Taxonomy" id="359786"/>
    <lineage>
        <taxon>Bacteria</taxon>
        <taxon>Bacillati</taxon>
        <taxon>Bacillota</taxon>
        <taxon>Bacilli</taxon>
        <taxon>Bacillales</taxon>
        <taxon>Staphylococcaceae</taxon>
        <taxon>Staphylococcus</taxon>
    </lineage>
</organism>
<gene>
    <name type="ordered locus">SaurJH9_0969</name>
</gene>
<sequence>MLHLHILSWVLAIILFIATYLNISKNQGGSPFFKPLHMILRLFMLLTLISGFWILIQSFMNGGANHMLLTLKMLCGVAVVGLMEVSIAKRKRHEQSHKMFWITMALIIITMVLGVILPLGPISKLFGIG</sequence>
<reference key="1">
    <citation type="submission" date="2007-05" db="EMBL/GenBank/DDBJ databases">
        <title>Complete sequence of chromosome of Staphylococcus aureus subsp. aureus JH9.</title>
        <authorList>
            <consortium name="US DOE Joint Genome Institute"/>
            <person name="Copeland A."/>
            <person name="Lucas S."/>
            <person name="Lapidus A."/>
            <person name="Barry K."/>
            <person name="Detter J.C."/>
            <person name="Glavina del Rio T."/>
            <person name="Hammon N."/>
            <person name="Israni S."/>
            <person name="Pitluck S."/>
            <person name="Chain P."/>
            <person name="Malfatti S."/>
            <person name="Shin M."/>
            <person name="Vergez L."/>
            <person name="Schmutz J."/>
            <person name="Larimer F."/>
            <person name="Land M."/>
            <person name="Hauser L."/>
            <person name="Kyrpides N."/>
            <person name="Kim E."/>
            <person name="Tomasz A."/>
            <person name="Richardson P."/>
        </authorList>
    </citation>
    <scope>NUCLEOTIDE SEQUENCE [LARGE SCALE GENOMIC DNA]</scope>
    <source>
        <strain>JH9</strain>
    </source>
</reference>
<evidence type="ECO:0000255" key="1">
    <source>
        <dbReference type="HAMAP-Rule" id="MF_01536"/>
    </source>
</evidence>
<accession>A5IRE7</accession>
<proteinExistence type="inferred from homology"/>
<comment type="subcellular location">
    <subcellularLocation>
        <location evidence="1">Cell membrane</location>
        <topology evidence="1">Multi-pass membrane protein</topology>
    </subcellularLocation>
</comment>
<comment type="similarity">
    <text evidence="1">Belongs to the UPF0344 family.</text>
</comment>
<feature type="chain" id="PRO_1000087605" description="UPF0344 protein SaurJH9_0969">
    <location>
        <begin position="1"/>
        <end position="129"/>
    </location>
</feature>
<feature type="transmembrane region" description="Helical" evidence="1">
    <location>
        <begin position="1"/>
        <end position="21"/>
    </location>
</feature>
<feature type="transmembrane region" description="Helical" evidence="1">
    <location>
        <begin position="36"/>
        <end position="56"/>
    </location>
</feature>
<feature type="transmembrane region" description="Helical" evidence="1">
    <location>
        <begin position="67"/>
        <end position="87"/>
    </location>
</feature>
<feature type="transmembrane region" description="Helical" evidence="1">
    <location>
        <begin position="99"/>
        <end position="119"/>
    </location>
</feature>
<dbReference type="EMBL" id="CP000703">
    <property type="protein sequence ID" value="ABQ48770.1"/>
    <property type="molecule type" value="Genomic_DNA"/>
</dbReference>
<dbReference type="RefSeq" id="WP_000902805.1">
    <property type="nucleotide sequence ID" value="NC_009487.1"/>
</dbReference>
<dbReference type="KEGG" id="saj:SaurJH9_0969"/>
<dbReference type="HOGENOM" id="CLU_146641_2_0_9"/>
<dbReference type="GO" id="GO:0005886">
    <property type="term" value="C:plasma membrane"/>
    <property type="evidence" value="ECO:0007669"/>
    <property type="project" value="UniProtKB-SubCell"/>
</dbReference>
<dbReference type="HAMAP" id="MF_01536">
    <property type="entry name" value="UPF0344"/>
    <property type="match status" value="1"/>
</dbReference>
<dbReference type="InterPro" id="IPR010899">
    <property type="entry name" value="UPF0344"/>
</dbReference>
<dbReference type="NCBIfam" id="NF010195">
    <property type="entry name" value="PRK13673.1-2"/>
    <property type="match status" value="1"/>
</dbReference>
<dbReference type="NCBIfam" id="NF010199">
    <property type="entry name" value="PRK13673.1-6"/>
    <property type="match status" value="1"/>
</dbReference>
<dbReference type="Pfam" id="PF07457">
    <property type="entry name" value="DUF1516"/>
    <property type="match status" value="1"/>
</dbReference>
<protein>
    <recommendedName>
        <fullName evidence="1">UPF0344 protein SaurJH9_0969</fullName>
    </recommendedName>
</protein>